<accession>P9WNY2</accession>
<accession>L0T7N9</accession>
<accession>P71825</accession>
<dbReference type="EC" id="1.1.-.-"/>
<dbReference type="EMBL" id="AE000516">
    <property type="protein sequence ID" value="AAK45036.1"/>
    <property type="molecule type" value="Genomic_DNA"/>
</dbReference>
<dbReference type="PIR" id="E70707">
    <property type="entry name" value="E70707"/>
</dbReference>
<dbReference type="RefSeq" id="WP_003403924.1">
    <property type="nucleotide sequence ID" value="NZ_KK341227.1"/>
</dbReference>
<dbReference type="SMR" id="P9WNY2"/>
<dbReference type="KEGG" id="mtc:MT0794"/>
<dbReference type="PATRIC" id="fig|83331.31.peg.853"/>
<dbReference type="HOGENOM" id="CLU_035117_1_1_11"/>
<dbReference type="Proteomes" id="UP000001020">
    <property type="component" value="Chromosome"/>
</dbReference>
<dbReference type="GO" id="GO:0051287">
    <property type="term" value="F:NAD binding"/>
    <property type="evidence" value="ECO:0007669"/>
    <property type="project" value="InterPro"/>
</dbReference>
<dbReference type="GO" id="GO:0050661">
    <property type="term" value="F:NADP binding"/>
    <property type="evidence" value="ECO:0007669"/>
    <property type="project" value="InterPro"/>
</dbReference>
<dbReference type="GO" id="GO:0016491">
    <property type="term" value="F:oxidoreductase activity"/>
    <property type="evidence" value="ECO:0007669"/>
    <property type="project" value="UniProtKB-KW"/>
</dbReference>
<dbReference type="GO" id="GO:0016054">
    <property type="term" value="P:organic acid catabolic process"/>
    <property type="evidence" value="ECO:0007669"/>
    <property type="project" value="UniProtKB-ARBA"/>
</dbReference>
<dbReference type="Gene3D" id="1.10.1040.10">
    <property type="entry name" value="N-(1-d-carboxylethyl)-l-norvaline Dehydrogenase, domain 2"/>
    <property type="match status" value="1"/>
</dbReference>
<dbReference type="Gene3D" id="3.40.50.720">
    <property type="entry name" value="NAD(P)-binding Rossmann-like Domain"/>
    <property type="match status" value="1"/>
</dbReference>
<dbReference type="InterPro" id="IPR002204">
    <property type="entry name" value="3-OH-isobutyrate_DH-rel_CS"/>
</dbReference>
<dbReference type="InterPro" id="IPR008927">
    <property type="entry name" value="6-PGluconate_DH-like_C_sf"/>
</dbReference>
<dbReference type="InterPro" id="IPR013328">
    <property type="entry name" value="6PGD_dom2"/>
</dbReference>
<dbReference type="InterPro" id="IPR006115">
    <property type="entry name" value="6PGDH_NADP-bd"/>
</dbReference>
<dbReference type="InterPro" id="IPR029154">
    <property type="entry name" value="HIBADH-like_NADP-bd"/>
</dbReference>
<dbReference type="InterPro" id="IPR015815">
    <property type="entry name" value="HIBADH-related"/>
</dbReference>
<dbReference type="InterPro" id="IPR036291">
    <property type="entry name" value="NAD(P)-bd_dom_sf"/>
</dbReference>
<dbReference type="PANTHER" id="PTHR43060">
    <property type="entry name" value="3-HYDROXYISOBUTYRATE DEHYDROGENASE-LIKE 1, MITOCHONDRIAL-RELATED"/>
    <property type="match status" value="1"/>
</dbReference>
<dbReference type="PANTHER" id="PTHR43060:SF15">
    <property type="entry name" value="3-HYDROXYISOBUTYRATE DEHYDROGENASE-LIKE 1, MITOCHONDRIAL-RELATED"/>
    <property type="match status" value="1"/>
</dbReference>
<dbReference type="Pfam" id="PF14833">
    <property type="entry name" value="NAD_binding_11"/>
    <property type="match status" value="1"/>
</dbReference>
<dbReference type="Pfam" id="PF03446">
    <property type="entry name" value="NAD_binding_2"/>
    <property type="match status" value="1"/>
</dbReference>
<dbReference type="PIRSF" id="PIRSF000103">
    <property type="entry name" value="HIBADH"/>
    <property type="match status" value="1"/>
</dbReference>
<dbReference type="SUPFAM" id="SSF48179">
    <property type="entry name" value="6-phosphogluconate dehydrogenase C-terminal domain-like"/>
    <property type="match status" value="1"/>
</dbReference>
<dbReference type="SUPFAM" id="SSF51735">
    <property type="entry name" value="NAD(P)-binding Rossmann-fold domains"/>
    <property type="match status" value="1"/>
</dbReference>
<dbReference type="PROSITE" id="PS00895">
    <property type="entry name" value="3_HYDROXYISOBUT_DH"/>
    <property type="match status" value="1"/>
</dbReference>
<gene>
    <name type="ordered locus">MT0794</name>
</gene>
<sequence>MTAHPETPRLGYIGLGNQGAPMAKRLLDWPGGLTVFDVRVEAMAPFVEGGATAAASVSDVAEADIISITVFDDAQVSSVITADNGLATHAKPGTIVAIHSTIADTTAVDLAEKLKPQGIHIVDAPVSGGAAAAAKGELAVMVGADDEAFQRIKEPFSRWASLLIHAGEPGAGTRMKLARNMLTFVSYAAAAEAQRLAEACGLDLVALGKVVRHSDSFTGGAGAIMFRNTTAPMEPADPLRPLLEHTRGLGEKDLSLALALGEVVSVDLPLAQLALQRLAAGLGVPHPDTEPAKET</sequence>
<protein>
    <recommendedName>
        <fullName>Uncharacterized oxidoreductase MT0794</fullName>
        <ecNumber>1.1.-.-</ecNumber>
    </recommendedName>
</protein>
<feature type="chain" id="PRO_0000427047" description="Uncharacterized oxidoreductase MT0794">
    <location>
        <begin position="1"/>
        <end position="295"/>
    </location>
</feature>
<feature type="active site" evidence="1">
    <location>
        <position position="176"/>
    </location>
</feature>
<feature type="binding site" evidence="1">
    <location>
        <begin position="11"/>
        <end position="25"/>
    </location>
    <ligand>
        <name>NAD(+)</name>
        <dbReference type="ChEBI" id="CHEBI:57540"/>
    </ligand>
</feature>
<feature type="binding site" evidence="1">
    <location>
        <position position="101"/>
    </location>
    <ligand>
        <name>NAD(+)</name>
        <dbReference type="ChEBI" id="CHEBI:57540"/>
    </ligand>
</feature>
<feature type="binding site" evidence="1">
    <location>
        <position position="252"/>
    </location>
    <ligand>
        <name>NAD(+)</name>
        <dbReference type="ChEBI" id="CHEBI:57540"/>
    </ligand>
</feature>
<comment type="similarity">
    <text evidence="2">Belongs to the HIBADH-related family.</text>
</comment>
<reference key="1">
    <citation type="journal article" date="2002" name="J. Bacteriol.">
        <title>Whole-genome comparison of Mycobacterium tuberculosis clinical and laboratory strains.</title>
        <authorList>
            <person name="Fleischmann R.D."/>
            <person name="Alland D."/>
            <person name="Eisen J.A."/>
            <person name="Carpenter L."/>
            <person name="White O."/>
            <person name="Peterson J.D."/>
            <person name="DeBoy R.T."/>
            <person name="Dodson R.J."/>
            <person name="Gwinn M.L."/>
            <person name="Haft D.H."/>
            <person name="Hickey E.K."/>
            <person name="Kolonay J.F."/>
            <person name="Nelson W.C."/>
            <person name="Umayam L.A."/>
            <person name="Ermolaeva M.D."/>
            <person name="Salzberg S.L."/>
            <person name="Delcher A."/>
            <person name="Utterback T.R."/>
            <person name="Weidman J.F."/>
            <person name="Khouri H.M."/>
            <person name="Gill J."/>
            <person name="Mikula A."/>
            <person name="Bishai W."/>
            <person name="Jacobs W.R. Jr."/>
            <person name="Venter J.C."/>
            <person name="Fraser C.M."/>
        </authorList>
    </citation>
    <scope>NUCLEOTIDE SEQUENCE [LARGE SCALE GENOMIC DNA]</scope>
    <source>
        <strain>CDC 1551 / Oshkosh</strain>
    </source>
</reference>
<proteinExistence type="inferred from homology"/>
<keyword id="KW-0520">NAD</keyword>
<keyword id="KW-0560">Oxidoreductase</keyword>
<keyword id="KW-1185">Reference proteome</keyword>
<organism>
    <name type="scientific">Mycobacterium tuberculosis (strain CDC 1551 / Oshkosh)</name>
    <dbReference type="NCBI Taxonomy" id="83331"/>
    <lineage>
        <taxon>Bacteria</taxon>
        <taxon>Bacillati</taxon>
        <taxon>Actinomycetota</taxon>
        <taxon>Actinomycetes</taxon>
        <taxon>Mycobacteriales</taxon>
        <taxon>Mycobacteriaceae</taxon>
        <taxon>Mycobacterium</taxon>
        <taxon>Mycobacterium tuberculosis complex</taxon>
    </lineage>
</organism>
<evidence type="ECO:0000250" key="1"/>
<evidence type="ECO:0000305" key="2"/>
<name>Y770_MYCTO</name>